<accession>Q03JS0</accession>
<protein>
    <recommendedName>
        <fullName evidence="1">Ribosome maturation factor RimM</fullName>
    </recommendedName>
</protein>
<feature type="chain" id="PRO_1000001241" description="Ribosome maturation factor RimM">
    <location>
        <begin position="1"/>
        <end position="172"/>
    </location>
</feature>
<feature type="domain" description="PRC barrel" evidence="1">
    <location>
        <begin position="96"/>
        <end position="168"/>
    </location>
</feature>
<proteinExistence type="inferred from homology"/>
<gene>
    <name evidence="1" type="primary">rimM</name>
    <name type="ordered locus">STER_1384</name>
</gene>
<keyword id="KW-0143">Chaperone</keyword>
<keyword id="KW-0963">Cytoplasm</keyword>
<keyword id="KW-0690">Ribosome biogenesis</keyword>
<keyword id="KW-0698">rRNA processing</keyword>
<dbReference type="EMBL" id="CP000419">
    <property type="protein sequence ID" value="ABJ66552.1"/>
    <property type="molecule type" value="Genomic_DNA"/>
</dbReference>
<dbReference type="RefSeq" id="WP_011681402.1">
    <property type="nucleotide sequence ID" value="NC_008532.1"/>
</dbReference>
<dbReference type="SMR" id="Q03JS0"/>
<dbReference type="KEGG" id="ste:STER_1384"/>
<dbReference type="HOGENOM" id="CLU_077636_3_1_9"/>
<dbReference type="GO" id="GO:0005737">
    <property type="term" value="C:cytoplasm"/>
    <property type="evidence" value="ECO:0007669"/>
    <property type="project" value="UniProtKB-SubCell"/>
</dbReference>
<dbReference type="GO" id="GO:0005840">
    <property type="term" value="C:ribosome"/>
    <property type="evidence" value="ECO:0007669"/>
    <property type="project" value="InterPro"/>
</dbReference>
<dbReference type="GO" id="GO:0043022">
    <property type="term" value="F:ribosome binding"/>
    <property type="evidence" value="ECO:0007669"/>
    <property type="project" value="InterPro"/>
</dbReference>
<dbReference type="GO" id="GO:0042274">
    <property type="term" value="P:ribosomal small subunit biogenesis"/>
    <property type="evidence" value="ECO:0007669"/>
    <property type="project" value="UniProtKB-UniRule"/>
</dbReference>
<dbReference type="GO" id="GO:0006364">
    <property type="term" value="P:rRNA processing"/>
    <property type="evidence" value="ECO:0007669"/>
    <property type="project" value="UniProtKB-UniRule"/>
</dbReference>
<dbReference type="Gene3D" id="2.30.30.240">
    <property type="entry name" value="PRC-barrel domain"/>
    <property type="match status" value="1"/>
</dbReference>
<dbReference type="Gene3D" id="2.40.30.60">
    <property type="entry name" value="RimM"/>
    <property type="match status" value="1"/>
</dbReference>
<dbReference type="HAMAP" id="MF_00014">
    <property type="entry name" value="Ribosome_mat_RimM"/>
    <property type="match status" value="1"/>
</dbReference>
<dbReference type="InterPro" id="IPR027275">
    <property type="entry name" value="PRC-brl_dom"/>
</dbReference>
<dbReference type="InterPro" id="IPR011033">
    <property type="entry name" value="PRC_barrel-like_sf"/>
</dbReference>
<dbReference type="InterPro" id="IPR011961">
    <property type="entry name" value="RimM"/>
</dbReference>
<dbReference type="InterPro" id="IPR002676">
    <property type="entry name" value="RimM_N"/>
</dbReference>
<dbReference type="InterPro" id="IPR036976">
    <property type="entry name" value="RimM_N_sf"/>
</dbReference>
<dbReference type="InterPro" id="IPR009000">
    <property type="entry name" value="Transl_B-barrel_sf"/>
</dbReference>
<dbReference type="NCBIfam" id="TIGR02273">
    <property type="entry name" value="16S_RimM"/>
    <property type="match status" value="1"/>
</dbReference>
<dbReference type="PANTHER" id="PTHR33692">
    <property type="entry name" value="RIBOSOME MATURATION FACTOR RIMM"/>
    <property type="match status" value="1"/>
</dbReference>
<dbReference type="PANTHER" id="PTHR33692:SF1">
    <property type="entry name" value="RIBOSOME MATURATION FACTOR RIMM"/>
    <property type="match status" value="1"/>
</dbReference>
<dbReference type="Pfam" id="PF05239">
    <property type="entry name" value="PRC"/>
    <property type="match status" value="1"/>
</dbReference>
<dbReference type="Pfam" id="PF01782">
    <property type="entry name" value="RimM"/>
    <property type="match status" value="1"/>
</dbReference>
<dbReference type="SUPFAM" id="SSF50346">
    <property type="entry name" value="PRC-barrel domain"/>
    <property type="match status" value="1"/>
</dbReference>
<dbReference type="SUPFAM" id="SSF50447">
    <property type="entry name" value="Translation proteins"/>
    <property type="match status" value="1"/>
</dbReference>
<sequence>MTYYNVGKIVNTQGLQGELRVLSVTDFTDERFKKKSVLALFDDKDNYIMDVEVASHRKHKNFDIVKFKGLYHINDVEKYKGCSLKIAEENLTDLDDGEFYYHEIIGLDVYEGNTLIGQVKEILQPGANDVWVVKRKGKKDLLLPYIPPVVLDVDVAAGRIEVELMEGLDDED</sequence>
<evidence type="ECO:0000255" key="1">
    <source>
        <dbReference type="HAMAP-Rule" id="MF_00014"/>
    </source>
</evidence>
<organism>
    <name type="scientific">Streptococcus thermophilus (strain ATCC BAA-491 / LMD-9)</name>
    <dbReference type="NCBI Taxonomy" id="322159"/>
    <lineage>
        <taxon>Bacteria</taxon>
        <taxon>Bacillati</taxon>
        <taxon>Bacillota</taxon>
        <taxon>Bacilli</taxon>
        <taxon>Lactobacillales</taxon>
        <taxon>Streptococcaceae</taxon>
        <taxon>Streptococcus</taxon>
    </lineage>
</organism>
<comment type="function">
    <text evidence="1">An accessory protein needed during the final step in the assembly of 30S ribosomal subunit, possibly for assembly of the head region. Essential for efficient processing of 16S rRNA. May be needed both before and after RbfA during the maturation of 16S rRNA. It has affinity for free ribosomal 30S subunits but not for 70S ribosomes.</text>
</comment>
<comment type="subunit">
    <text evidence="1">Binds ribosomal protein uS19.</text>
</comment>
<comment type="subcellular location">
    <subcellularLocation>
        <location evidence="1">Cytoplasm</location>
    </subcellularLocation>
</comment>
<comment type="domain">
    <text evidence="1">The PRC barrel domain binds ribosomal protein uS19.</text>
</comment>
<comment type="similarity">
    <text evidence="1">Belongs to the RimM family.</text>
</comment>
<name>RIMM_STRTD</name>
<reference key="1">
    <citation type="journal article" date="2006" name="Proc. Natl. Acad. Sci. U.S.A.">
        <title>Comparative genomics of the lactic acid bacteria.</title>
        <authorList>
            <person name="Makarova K.S."/>
            <person name="Slesarev A."/>
            <person name="Wolf Y.I."/>
            <person name="Sorokin A."/>
            <person name="Mirkin B."/>
            <person name="Koonin E.V."/>
            <person name="Pavlov A."/>
            <person name="Pavlova N."/>
            <person name="Karamychev V."/>
            <person name="Polouchine N."/>
            <person name="Shakhova V."/>
            <person name="Grigoriev I."/>
            <person name="Lou Y."/>
            <person name="Rohksar D."/>
            <person name="Lucas S."/>
            <person name="Huang K."/>
            <person name="Goodstein D.M."/>
            <person name="Hawkins T."/>
            <person name="Plengvidhya V."/>
            <person name="Welker D."/>
            <person name="Hughes J."/>
            <person name="Goh Y."/>
            <person name="Benson A."/>
            <person name="Baldwin K."/>
            <person name="Lee J.-H."/>
            <person name="Diaz-Muniz I."/>
            <person name="Dosti B."/>
            <person name="Smeianov V."/>
            <person name="Wechter W."/>
            <person name="Barabote R."/>
            <person name="Lorca G."/>
            <person name="Altermann E."/>
            <person name="Barrangou R."/>
            <person name="Ganesan B."/>
            <person name="Xie Y."/>
            <person name="Rawsthorne H."/>
            <person name="Tamir D."/>
            <person name="Parker C."/>
            <person name="Breidt F."/>
            <person name="Broadbent J.R."/>
            <person name="Hutkins R."/>
            <person name="O'Sullivan D."/>
            <person name="Steele J."/>
            <person name="Unlu G."/>
            <person name="Saier M.H. Jr."/>
            <person name="Klaenhammer T."/>
            <person name="Richardson P."/>
            <person name="Kozyavkin S."/>
            <person name="Weimer B.C."/>
            <person name="Mills D.A."/>
        </authorList>
    </citation>
    <scope>NUCLEOTIDE SEQUENCE [LARGE SCALE GENOMIC DNA]</scope>
    <source>
        <strain>ATCC BAA-491 / LMD-9</strain>
    </source>
</reference>